<protein>
    <recommendedName>
        <fullName>MAGUK p55 subfamily member 2</fullName>
    </recommendedName>
    <alternativeName>
        <fullName>Discs large homolog 2</fullName>
    </alternativeName>
    <alternativeName>
        <fullName>Protein MPP2</fullName>
    </alternativeName>
</protein>
<organism>
    <name type="scientific">Mus musculus</name>
    <name type="common">Mouse</name>
    <dbReference type="NCBI Taxonomy" id="10090"/>
    <lineage>
        <taxon>Eukaryota</taxon>
        <taxon>Metazoa</taxon>
        <taxon>Chordata</taxon>
        <taxon>Craniata</taxon>
        <taxon>Vertebrata</taxon>
        <taxon>Euteleostomi</taxon>
        <taxon>Mammalia</taxon>
        <taxon>Eutheria</taxon>
        <taxon>Euarchontoglires</taxon>
        <taxon>Glires</taxon>
        <taxon>Rodentia</taxon>
        <taxon>Myomorpha</taxon>
        <taxon>Muroidea</taxon>
        <taxon>Muridae</taxon>
        <taxon>Murinae</taxon>
        <taxon>Mus</taxon>
        <taxon>Mus</taxon>
    </lineage>
</organism>
<gene>
    <name evidence="10" type="primary">Mpp2</name>
    <name type="synonym">Dlgh2</name>
</gene>
<keyword id="KW-0025">Alternative splicing</keyword>
<keyword id="KW-0966">Cell projection</keyword>
<keyword id="KW-0963">Cytoplasm</keyword>
<keyword id="KW-0206">Cytoskeleton</keyword>
<keyword id="KW-0903">Direct protein sequencing</keyword>
<keyword id="KW-0472">Membrane</keyword>
<keyword id="KW-0597">Phosphoprotein</keyword>
<keyword id="KW-1185">Reference proteome</keyword>
<keyword id="KW-0677">Repeat</keyword>
<keyword id="KW-0728">SH3 domain</keyword>
<keyword id="KW-0770">Synapse</keyword>
<evidence type="ECO:0000250" key="1">
    <source>
        <dbReference type="UniProtKB" id="D3ZAA9"/>
    </source>
</evidence>
<evidence type="ECO:0000250" key="2">
    <source>
        <dbReference type="UniProtKB" id="Q14168"/>
    </source>
</evidence>
<evidence type="ECO:0000255" key="3">
    <source>
        <dbReference type="PROSITE-ProRule" id="PRU00100"/>
    </source>
</evidence>
<evidence type="ECO:0000255" key="4">
    <source>
        <dbReference type="PROSITE-ProRule" id="PRU00143"/>
    </source>
</evidence>
<evidence type="ECO:0000255" key="5">
    <source>
        <dbReference type="PROSITE-ProRule" id="PRU00192"/>
    </source>
</evidence>
<evidence type="ECO:0000255" key="6">
    <source>
        <dbReference type="PROSITE-ProRule" id="PRU00365"/>
    </source>
</evidence>
<evidence type="ECO:0000269" key="7">
    <source>
    </source>
</evidence>
<evidence type="ECO:0000303" key="8">
    <source>
    </source>
</evidence>
<evidence type="ECO:0000305" key="9"/>
<evidence type="ECO:0000312" key="10">
    <source>
        <dbReference type="MGI" id="MGI:1858257"/>
    </source>
</evidence>
<evidence type="ECO:0007744" key="11">
    <source>
    </source>
</evidence>
<evidence type="ECO:0007744" key="12">
    <source>
    </source>
</evidence>
<feature type="chain" id="PRO_0000094574" description="MAGUK p55 subfamily member 2">
    <location>
        <begin position="1"/>
        <end position="552"/>
    </location>
</feature>
<feature type="domain" description="L27 1" evidence="6">
    <location>
        <begin position="8"/>
        <end position="59"/>
    </location>
</feature>
<feature type="domain" description="L27 2" evidence="6">
    <location>
        <begin position="60"/>
        <end position="118"/>
    </location>
</feature>
<feature type="domain" description="PDZ" evidence="4">
    <location>
        <begin position="140"/>
        <end position="219"/>
    </location>
</feature>
<feature type="domain" description="SH3" evidence="5">
    <location>
        <begin position="225"/>
        <end position="293"/>
    </location>
</feature>
<feature type="domain" description="Guanylate kinase-like" evidence="3">
    <location>
        <begin position="350"/>
        <end position="537"/>
    </location>
</feature>
<feature type="modified residue" description="Phosphoserine" evidence="1">
    <location>
        <position position="42"/>
    </location>
</feature>
<feature type="modified residue" description="Phosphothreonine" evidence="12">
    <location>
        <position position="117"/>
    </location>
</feature>
<feature type="modified residue" description="Phosphoserine" evidence="11 12">
    <location>
        <position position="121"/>
    </location>
</feature>
<feature type="splice variant" id="VSP_022952" description="In isoform 2." evidence="8">
    <original>MPVAATNSES</original>
    <variation>MACSPGSEGSLEGISLGSSEEAELRRE</variation>
    <location>
        <begin position="1"/>
        <end position="10"/>
    </location>
</feature>
<feature type="sequence conflict" description="In Ref. 2; BAE42909." evidence="9" ref="2">
    <original>I</original>
    <variation>T</variation>
    <location>
        <position position="215"/>
    </location>
</feature>
<comment type="function">
    <text evidence="1 2 7">Postsynaptic MAGUK scaffold protein that links CADM1 cell adhesion molecules to core components of the postsynaptic density (By similarity). In CA1 pyramidal neurons, required for synaptic KCNN2-containing channel function and long-term potentiation expression (PubMed:26880549). Seems to negatively regulate SRC function in epithelial cells (By similarity).</text>
</comment>
<comment type="subunit">
    <text evidence="1 2 7">Can homomultimerise. Interacts with CACNG2. Interacts (via the SH3-Guanylate kinase-like sub-module) with DLG4/PSD95 and DLGAP1/GKAP. Interacts (via the PDZ domain) with CADM1 (via C-terminus) (By similarity). Interacts with KCNN2/SK2 (via N-terminal domain) (PubMed:26880549). Interacts with SRC (By similarity).</text>
</comment>
<comment type="subcellular location">
    <subcellularLocation>
        <location evidence="7">Cell projection</location>
        <location evidence="7">Dendrite</location>
    </subcellularLocation>
    <subcellularLocation>
        <location evidence="7">Postsynaptic density</location>
    </subcellularLocation>
    <subcellularLocation>
        <location evidence="2">Cytoplasm</location>
        <location evidence="2">Cytoskeleton</location>
    </subcellularLocation>
    <subcellularLocation>
        <location evidence="2">Membrane</location>
    </subcellularLocation>
    <text evidence="7">Prominently expressed in the postsynaptic densities of dendritic spines, is also detected in dendritic shafts.</text>
</comment>
<comment type="alternative products">
    <event type="alternative splicing"/>
    <isoform>
        <id>Q9WV34-1</id>
        <name>1</name>
        <sequence type="displayed"/>
    </isoform>
    <isoform>
        <id>Q9WV34-2</id>
        <name>2</name>
        <sequence type="described" ref="VSP_022952"/>
    </isoform>
</comment>
<comment type="tissue specificity">
    <text evidence="7">Expressed in pyramidal neurons of CA1 region of the hippocampus.</text>
</comment>
<comment type="PTM">
    <text evidence="2">Phosphorylated by SRC.</text>
</comment>
<comment type="similarity">
    <text evidence="9">Belongs to the MAGUK family.</text>
</comment>
<proteinExistence type="evidence at protein level"/>
<sequence length="552" mass="61555">MPVAATNSESAMQQVLDNLGSLPNATGAAELDLIFLRGIMESPIVRSLAKAHERLEETKLEAVRDNNLELVQEILRDLAELAEQSSTAAELARILQEPHFQSLLETHDSVASKTYETPPPSPGLDPTFSNQPVPPDAVRMVGIRKTAGEHLGVTFRVEGGELVIARILHGGMVAQQGLLHVGDIIKEVNGQPVGSDPRALQELLRSASGSVILKILPSYQEPHLPRQVFVKCHFDYDPARDSLSPCKEAGLRFNAGDLLQIVNQDDANWWQACHVEGGSAGLIPSQLLEEKRKAFVKRDLELTPTSGTLCGSLSGKKKKRMMYLTTKNAEFDRHELLIYEEVARMPPFRRKTLVLIGAQGVGRRSLKNKLILWDPDRYGTTVPYTSRRPKDSEREGQGYSFVSRGEMEADIRAGRYLEHGEYEGNLYGTRIDSIRGVVASGKVCVLDVNPQAVKVLRTAEFVPYVVFIEAPDYETLRAMNRAALESGVSTKQLTEADLRRTVEESSRIQRGYGHYFDLSLVNSNLERTFRELQTAMEKLRTEPQWVPVSWVY</sequence>
<accession>Q9WV34</accession>
<accession>B1AQF8</accession>
<accession>Q3T9W1</accession>
<accession>Q3TT52</accession>
<accession>Q3URK8</accession>
<reference key="1">
    <citation type="submission" date="1999-06" db="EMBL/GenBank/DDBJ databases">
        <authorList>
            <person name="Lin L."/>
            <person name="Chishti A.H."/>
        </authorList>
    </citation>
    <scope>NUCLEOTIDE SEQUENCE [MRNA] (ISOFORM 1)</scope>
</reference>
<reference key="2">
    <citation type="journal article" date="2005" name="Science">
        <title>The transcriptional landscape of the mammalian genome.</title>
        <authorList>
            <person name="Carninci P."/>
            <person name="Kasukawa T."/>
            <person name="Katayama S."/>
            <person name="Gough J."/>
            <person name="Frith M.C."/>
            <person name="Maeda N."/>
            <person name="Oyama R."/>
            <person name="Ravasi T."/>
            <person name="Lenhard B."/>
            <person name="Wells C."/>
            <person name="Kodzius R."/>
            <person name="Shimokawa K."/>
            <person name="Bajic V.B."/>
            <person name="Brenner S.E."/>
            <person name="Batalov S."/>
            <person name="Forrest A.R."/>
            <person name="Zavolan M."/>
            <person name="Davis M.J."/>
            <person name="Wilming L.G."/>
            <person name="Aidinis V."/>
            <person name="Allen J.E."/>
            <person name="Ambesi-Impiombato A."/>
            <person name="Apweiler R."/>
            <person name="Aturaliya R.N."/>
            <person name="Bailey T.L."/>
            <person name="Bansal M."/>
            <person name="Baxter L."/>
            <person name="Beisel K.W."/>
            <person name="Bersano T."/>
            <person name="Bono H."/>
            <person name="Chalk A.M."/>
            <person name="Chiu K.P."/>
            <person name="Choudhary V."/>
            <person name="Christoffels A."/>
            <person name="Clutterbuck D.R."/>
            <person name="Crowe M.L."/>
            <person name="Dalla E."/>
            <person name="Dalrymple B.P."/>
            <person name="de Bono B."/>
            <person name="Della Gatta G."/>
            <person name="di Bernardo D."/>
            <person name="Down T."/>
            <person name="Engstrom P."/>
            <person name="Fagiolini M."/>
            <person name="Faulkner G."/>
            <person name="Fletcher C.F."/>
            <person name="Fukushima T."/>
            <person name="Furuno M."/>
            <person name="Futaki S."/>
            <person name="Gariboldi M."/>
            <person name="Georgii-Hemming P."/>
            <person name="Gingeras T.R."/>
            <person name="Gojobori T."/>
            <person name="Green R.E."/>
            <person name="Gustincich S."/>
            <person name="Harbers M."/>
            <person name="Hayashi Y."/>
            <person name="Hensch T.K."/>
            <person name="Hirokawa N."/>
            <person name="Hill D."/>
            <person name="Huminiecki L."/>
            <person name="Iacono M."/>
            <person name="Ikeo K."/>
            <person name="Iwama A."/>
            <person name="Ishikawa T."/>
            <person name="Jakt M."/>
            <person name="Kanapin A."/>
            <person name="Katoh M."/>
            <person name="Kawasawa Y."/>
            <person name="Kelso J."/>
            <person name="Kitamura H."/>
            <person name="Kitano H."/>
            <person name="Kollias G."/>
            <person name="Krishnan S.P."/>
            <person name="Kruger A."/>
            <person name="Kummerfeld S.K."/>
            <person name="Kurochkin I.V."/>
            <person name="Lareau L.F."/>
            <person name="Lazarevic D."/>
            <person name="Lipovich L."/>
            <person name="Liu J."/>
            <person name="Liuni S."/>
            <person name="McWilliam S."/>
            <person name="Madan Babu M."/>
            <person name="Madera M."/>
            <person name="Marchionni L."/>
            <person name="Matsuda H."/>
            <person name="Matsuzawa S."/>
            <person name="Miki H."/>
            <person name="Mignone F."/>
            <person name="Miyake S."/>
            <person name="Morris K."/>
            <person name="Mottagui-Tabar S."/>
            <person name="Mulder N."/>
            <person name="Nakano N."/>
            <person name="Nakauchi H."/>
            <person name="Ng P."/>
            <person name="Nilsson R."/>
            <person name="Nishiguchi S."/>
            <person name="Nishikawa S."/>
            <person name="Nori F."/>
            <person name="Ohara O."/>
            <person name="Okazaki Y."/>
            <person name="Orlando V."/>
            <person name="Pang K.C."/>
            <person name="Pavan W.J."/>
            <person name="Pavesi G."/>
            <person name="Pesole G."/>
            <person name="Petrovsky N."/>
            <person name="Piazza S."/>
            <person name="Reed J."/>
            <person name="Reid J.F."/>
            <person name="Ring B.Z."/>
            <person name="Ringwald M."/>
            <person name="Rost B."/>
            <person name="Ruan Y."/>
            <person name="Salzberg S.L."/>
            <person name="Sandelin A."/>
            <person name="Schneider C."/>
            <person name="Schoenbach C."/>
            <person name="Sekiguchi K."/>
            <person name="Semple C.A."/>
            <person name="Seno S."/>
            <person name="Sessa L."/>
            <person name="Sheng Y."/>
            <person name="Shibata Y."/>
            <person name="Shimada H."/>
            <person name="Shimada K."/>
            <person name="Silva D."/>
            <person name="Sinclair B."/>
            <person name="Sperling S."/>
            <person name="Stupka E."/>
            <person name="Sugiura K."/>
            <person name="Sultana R."/>
            <person name="Takenaka Y."/>
            <person name="Taki K."/>
            <person name="Tammoja K."/>
            <person name="Tan S.L."/>
            <person name="Tang S."/>
            <person name="Taylor M.S."/>
            <person name="Tegner J."/>
            <person name="Teichmann S.A."/>
            <person name="Ueda H.R."/>
            <person name="van Nimwegen E."/>
            <person name="Verardo R."/>
            <person name="Wei C.L."/>
            <person name="Yagi K."/>
            <person name="Yamanishi H."/>
            <person name="Zabarovsky E."/>
            <person name="Zhu S."/>
            <person name="Zimmer A."/>
            <person name="Hide W."/>
            <person name="Bult C."/>
            <person name="Grimmond S.M."/>
            <person name="Teasdale R.D."/>
            <person name="Liu E.T."/>
            <person name="Brusic V."/>
            <person name="Quackenbush J."/>
            <person name="Wahlestedt C."/>
            <person name="Mattick J.S."/>
            <person name="Hume D.A."/>
            <person name="Kai C."/>
            <person name="Sasaki D."/>
            <person name="Tomaru Y."/>
            <person name="Fukuda S."/>
            <person name="Kanamori-Katayama M."/>
            <person name="Suzuki M."/>
            <person name="Aoki J."/>
            <person name="Arakawa T."/>
            <person name="Iida J."/>
            <person name="Imamura K."/>
            <person name="Itoh M."/>
            <person name="Kato T."/>
            <person name="Kawaji H."/>
            <person name="Kawagashira N."/>
            <person name="Kawashima T."/>
            <person name="Kojima M."/>
            <person name="Kondo S."/>
            <person name="Konno H."/>
            <person name="Nakano K."/>
            <person name="Ninomiya N."/>
            <person name="Nishio T."/>
            <person name="Okada M."/>
            <person name="Plessy C."/>
            <person name="Shibata K."/>
            <person name="Shiraki T."/>
            <person name="Suzuki S."/>
            <person name="Tagami M."/>
            <person name="Waki K."/>
            <person name="Watahiki A."/>
            <person name="Okamura-Oho Y."/>
            <person name="Suzuki H."/>
            <person name="Kawai J."/>
            <person name="Hayashizaki Y."/>
        </authorList>
    </citation>
    <scope>NUCLEOTIDE SEQUENCE [LARGE SCALE MRNA] (ISOFORMS 1 AND 2)</scope>
    <source>
        <strain>C57BL/6J</strain>
        <strain>NOD</strain>
        <tissue>Pituitary</tissue>
        <tissue>Spinal cord</tissue>
        <tissue>Spleen</tissue>
    </source>
</reference>
<reference key="3">
    <citation type="journal article" date="2009" name="PLoS Biol.">
        <title>Lineage-specific biology revealed by a finished genome assembly of the mouse.</title>
        <authorList>
            <person name="Church D.M."/>
            <person name="Goodstadt L."/>
            <person name="Hillier L.W."/>
            <person name="Zody M.C."/>
            <person name="Goldstein S."/>
            <person name="She X."/>
            <person name="Bult C.J."/>
            <person name="Agarwala R."/>
            <person name="Cherry J.L."/>
            <person name="DiCuccio M."/>
            <person name="Hlavina W."/>
            <person name="Kapustin Y."/>
            <person name="Meric P."/>
            <person name="Maglott D."/>
            <person name="Birtle Z."/>
            <person name="Marques A.C."/>
            <person name="Graves T."/>
            <person name="Zhou S."/>
            <person name="Teague B."/>
            <person name="Potamousis K."/>
            <person name="Churas C."/>
            <person name="Place M."/>
            <person name="Herschleb J."/>
            <person name="Runnheim R."/>
            <person name="Forrest D."/>
            <person name="Amos-Landgraf J."/>
            <person name="Schwartz D.C."/>
            <person name="Cheng Z."/>
            <person name="Lindblad-Toh K."/>
            <person name="Eichler E.E."/>
            <person name="Ponting C.P."/>
        </authorList>
    </citation>
    <scope>NUCLEOTIDE SEQUENCE [LARGE SCALE GENOMIC DNA]</scope>
    <source>
        <strain>C57BL/6J</strain>
    </source>
</reference>
<reference key="4">
    <citation type="journal article" date="2004" name="Genome Res.">
        <title>The status, quality, and expansion of the NIH full-length cDNA project: the Mammalian Gene Collection (MGC).</title>
        <authorList>
            <consortium name="The MGC Project Team"/>
        </authorList>
    </citation>
    <scope>NUCLEOTIDE SEQUENCE [LARGE SCALE MRNA] (ISOFORM 1)</scope>
    <source>
        <strain>C57BL/6J</strain>
        <tissue>Brain</tissue>
    </source>
</reference>
<reference key="5">
    <citation type="submission" date="2007-04" db="UniProtKB">
        <authorList>
            <person name="Lubec G."/>
            <person name="Kang S.U."/>
        </authorList>
    </citation>
    <scope>PROTEIN SEQUENCE OF 38-46 AND 378-387</scope>
    <scope>IDENTIFICATION BY MASS SPECTROMETRY</scope>
    <source>
        <strain>C57BL/6J</strain>
        <tissue>Brain</tissue>
    </source>
</reference>
<reference key="6">
    <citation type="journal article" date="2004" name="Mol. Cell. Proteomics">
        <title>Phosphoproteomic analysis of the developing mouse brain.</title>
        <authorList>
            <person name="Ballif B.A."/>
            <person name="Villen J."/>
            <person name="Beausoleil S.A."/>
            <person name="Schwartz D."/>
            <person name="Gygi S.P."/>
        </authorList>
    </citation>
    <scope>PHOSPHORYLATION [LARGE SCALE ANALYSIS] AT SER-121</scope>
    <scope>IDENTIFICATION BY MASS SPECTROMETRY [LARGE SCALE ANALYSIS]</scope>
    <source>
        <tissue>Embryonic brain</tissue>
    </source>
</reference>
<reference key="7">
    <citation type="journal article" date="2010" name="Cell">
        <title>A tissue-specific atlas of mouse protein phosphorylation and expression.</title>
        <authorList>
            <person name="Huttlin E.L."/>
            <person name="Jedrychowski M.P."/>
            <person name="Elias J.E."/>
            <person name="Goswami T."/>
            <person name="Rad R."/>
            <person name="Beausoleil S.A."/>
            <person name="Villen J."/>
            <person name="Haas W."/>
            <person name="Sowa M.E."/>
            <person name="Gygi S.P."/>
        </authorList>
    </citation>
    <scope>PHOSPHORYLATION [LARGE SCALE ANALYSIS] AT THR-117 AND SER-121</scope>
    <scope>IDENTIFICATION BY MASS SPECTROMETRY [LARGE SCALE ANALYSIS]</scope>
    <source>
        <tissue>Brain</tissue>
        <tissue>Brown adipose tissue</tissue>
        <tissue>Kidney</tissue>
        <tissue>Lung</tissue>
        <tissue>Spleen</tissue>
    </source>
</reference>
<reference key="8">
    <citation type="journal article" date="2016" name="Elife">
        <title>Membrane palmitoylated protein 2 is a synaptic scaffold protein required for synaptic SK2-containing channel function.</title>
        <authorList>
            <person name="Kim G."/>
            <person name="Lujan R."/>
            <person name="Schwenk J."/>
            <person name="Kelley M.H."/>
            <person name="Aguado C."/>
            <person name="Watanabe M."/>
            <person name="Fakler B."/>
            <person name="Maylie J."/>
            <person name="Adelman J.P."/>
        </authorList>
    </citation>
    <scope>FUNCTION</scope>
    <scope>TISSUE SPECIFICITY</scope>
    <scope>SUBCELLULAR LOCATION</scope>
    <scope>INTERACTION WITH KCNN2</scope>
</reference>
<name>MPP2_MOUSE</name>
<dbReference type="EMBL" id="AF162685">
    <property type="protein sequence ID" value="AAD44342.1"/>
    <property type="molecule type" value="mRNA"/>
</dbReference>
<dbReference type="EMBL" id="AK141422">
    <property type="protein sequence ID" value="BAE24680.1"/>
    <property type="molecule type" value="mRNA"/>
</dbReference>
<dbReference type="EMBL" id="AK161577">
    <property type="protein sequence ID" value="BAE36473.1"/>
    <property type="molecule type" value="mRNA"/>
</dbReference>
<dbReference type="EMBL" id="AK172253">
    <property type="protein sequence ID" value="BAE42909.1"/>
    <property type="molecule type" value="mRNA"/>
</dbReference>
<dbReference type="EMBL" id="AL591145">
    <property type="status" value="NOT_ANNOTATED_CDS"/>
    <property type="molecule type" value="Genomic_DNA"/>
</dbReference>
<dbReference type="EMBL" id="BC053026">
    <property type="protein sequence ID" value="AAH53026.1"/>
    <property type="molecule type" value="mRNA"/>
</dbReference>
<dbReference type="CCDS" id="CCDS25485.1">
    <molecule id="Q9WV34-1"/>
</dbReference>
<dbReference type="CCDS" id="CCDS88261.1">
    <molecule id="Q9WV34-2"/>
</dbReference>
<dbReference type="RefSeq" id="NP_001343253.1">
    <molecule id="Q9WV34-2"/>
    <property type="nucleotide sequence ID" value="NM_001356324.2"/>
</dbReference>
<dbReference type="RefSeq" id="NP_001401145.1">
    <molecule id="Q9WV34-1"/>
    <property type="nucleotide sequence ID" value="NM_001414216.1"/>
</dbReference>
<dbReference type="RefSeq" id="NP_001401146.1">
    <molecule id="Q9WV34-1"/>
    <property type="nucleotide sequence ID" value="NM_001414217.1"/>
</dbReference>
<dbReference type="RefSeq" id="NP_001401147.1">
    <molecule id="Q9WV34-1"/>
    <property type="nucleotide sequence ID" value="NM_001414218.1"/>
</dbReference>
<dbReference type="RefSeq" id="NP_001401148.1">
    <molecule id="Q9WV34-1"/>
    <property type="nucleotide sequence ID" value="NM_001414219.1"/>
</dbReference>
<dbReference type="RefSeq" id="NP_057904.1">
    <molecule id="Q9WV34-1"/>
    <property type="nucleotide sequence ID" value="NM_016695.5"/>
</dbReference>
<dbReference type="RefSeq" id="XP_006533746.1">
    <property type="nucleotide sequence ID" value="XM_006533683.3"/>
</dbReference>
<dbReference type="RefSeq" id="XP_006533747.1">
    <property type="nucleotide sequence ID" value="XM_006533684.3"/>
</dbReference>
<dbReference type="RefSeq" id="XP_006533748.1">
    <property type="nucleotide sequence ID" value="XM_006533685.3"/>
</dbReference>
<dbReference type="BMRB" id="Q9WV34"/>
<dbReference type="SMR" id="Q9WV34"/>
<dbReference type="BioGRID" id="206171">
    <property type="interactions" value="9"/>
</dbReference>
<dbReference type="FunCoup" id="Q9WV34">
    <property type="interactions" value="779"/>
</dbReference>
<dbReference type="IntAct" id="Q9WV34">
    <property type="interactions" value="5"/>
</dbReference>
<dbReference type="MINT" id="Q9WV34"/>
<dbReference type="STRING" id="10090.ENSMUSP00000017458"/>
<dbReference type="GlyGen" id="Q9WV34">
    <property type="glycosylation" value="2 sites, 1 O-linked glycan (2 sites)"/>
</dbReference>
<dbReference type="iPTMnet" id="Q9WV34"/>
<dbReference type="PhosphoSitePlus" id="Q9WV34"/>
<dbReference type="SwissPalm" id="Q9WV34"/>
<dbReference type="PaxDb" id="10090-ENSMUSP00000017458"/>
<dbReference type="PeptideAtlas" id="Q9WV34"/>
<dbReference type="ProteomicsDB" id="290303">
    <molecule id="Q9WV34-1"/>
</dbReference>
<dbReference type="ProteomicsDB" id="290304">
    <molecule id="Q9WV34-2"/>
</dbReference>
<dbReference type="Antibodypedia" id="17305">
    <property type="antibodies" value="221 antibodies from 26 providers"/>
</dbReference>
<dbReference type="DNASU" id="50997"/>
<dbReference type="Ensembl" id="ENSMUST00000017458.11">
    <molecule id="Q9WV34-1"/>
    <property type="protein sequence ID" value="ENSMUSP00000017458.4"/>
    <property type="gene ID" value="ENSMUSG00000017314.13"/>
</dbReference>
<dbReference type="Ensembl" id="ENSMUST00000100398.5">
    <molecule id="Q9WV34-2"/>
    <property type="protein sequence ID" value="ENSMUSP00000097967.5"/>
    <property type="gene ID" value="ENSMUSG00000017314.13"/>
</dbReference>
<dbReference type="GeneID" id="50997"/>
<dbReference type="KEGG" id="mmu:50997"/>
<dbReference type="UCSC" id="uc007lqk.2">
    <molecule id="Q9WV34-2"/>
    <property type="organism name" value="mouse"/>
</dbReference>
<dbReference type="UCSC" id="uc007lql.2">
    <molecule id="Q9WV34-1"/>
    <property type="organism name" value="mouse"/>
</dbReference>
<dbReference type="AGR" id="MGI:1858257"/>
<dbReference type="CTD" id="4355"/>
<dbReference type="MGI" id="MGI:1858257">
    <property type="gene designation" value="Mpp2"/>
</dbReference>
<dbReference type="VEuPathDB" id="HostDB:ENSMUSG00000017314"/>
<dbReference type="eggNOG" id="KOG0609">
    <property type="taxonomic scope" value="Eukaryota"/>
</dbReference>
<dbReference type="GeneTree" id="ENSGT00940000155348"/>
<dbReference type="HOGENOM" id="CLU_001715_5_1_1"/>
<dbReference type="InParanoid" id="Q9WV34"/>
<dbReference type="OMA" id="NESQWVP"/>
<dbReference type="PhylomeDB" id="Q9WV34"/>
<dbReference type="TreeFam" id="TF314263"/>
<dbReference type="BioGRID-ORCS" id="50997">
    <property type="hits" value="1 hit in 77 CRISPR screens"/>
</dbReference>
<dbReference type="CD-CODE" id="CE726F99">
    <property type="entry name" value="Postsynaptic density"/>
</dbReference>
<dbReference type="ChiTaRS" id="Mpp2">
    <property type="organism name" value="mouse"/>
</dbReference>
<dbReference type="PRO" id="PR:Q9WV34"/>
<dbReference type="Proteomes" id="UP000000589">
    <property type="component" value="Chromosome 11"/>
</dbReference>
<dbReference type="RNAct" id="Q9WV34">
    <property type="molecule type" value="protein"/>
</dbReference>
<dbReference type="Bgee" id="ENSMUSG00000017314">
    <property type="expression patterns" value="Expressed in dentate gyrus of hippocampal formation granule cell and 124 other cell types or tissues"/>
</dbReference>
<dbReference type="GO" id="GO:0005737">
    <property type="term" value="C:cytoplasm"/>
    <property type="evidence" value="ECO:0007669"/>
    <property type="project" value="UniProtKB-KW"/>
</dbReference>
<dbReference type="GO" id="GO:0005856">
    <property type="term" value="C:cytoskeleton"/>
    <property type="evidence" value="ECO:0000250"/>
    <property type="project" value="UniProtKB"/>
</dbReference>
<dbReference type="GO" id="GO:0032590">
    <property type="term" value="C:dendrite membrane"/>
    <property type="evidence" value="ECO:0000314"/>
    <property type="project" value="UniProtKB"/>
</dbReference>
<dbReference type="GO" id="GO:0043198">
    <property type="term" value="C:dendritic shaft"/>
    <property type="evidence" value="ECO:0000314"/>
    <property type="project" value="UniProtKB"/>
</dbReference>
<dbReference type="GO" id="GO:0043197">
    <property type="term" value="C:dendritic spine"/>
    <property type="evidence" value="ECO:0000314"/>
    <property type="project" value="UniProtKB"/>
</dbReference>
<dbReference type="GO" id="GO:0098978">
    <property type="term" value="C:glutamatergic synapse"/>
    <property type="evidence" value="ECO:0000314"/>
    <property type="project" value="SynGO"/>
</dbReference>
<dbReference type="GO" id="GO:0014069">
    <property type="term" value="C:postsynaptic density"/>
    <property type="evidence" value="ECO:0000250"/>
    <property type="project" value="UniProtKB"/>
</dbReference>
<dbReference type="GO" id="GO:0098839">
    <property type="term" value="C:postsynaptic density membrane"/>
    <property type="evidence" value="ECO:0000314"/>
    <property type="project" value="SynGO"/>
</dbReference>
<dbReference type="GO" id="GO:0098685">
    <property type="term" value="C:Schaffer collateral - CA1 synapse"/>
    <property type="evidence" value="ECO:0000314"/>
    <property type="project" value="SynGO"/>
</dbReference>
<dbReference type="GO" id="GO:0098919">
    <property type="term" value="F:structural constituent of postsynaptic density"/>
    <property type="evidence" value="ECO:0000314"/>
    <property type="project" value="SynGO"/>
</dbReference>
<dbReference type="GO" id="GO:0044325">
    <property type="term" value="F:transmembrane transporter binding"/>
    <property type="evidence" value="ECO:0000353"/>
    <property type="project" value="UniProtKB"/>
</dbReference>
<dbReference type="GO" id="GO:0060079">
    <property type="term" value="P:excitatory postsynaptic potential"/>
    <property type="evidence" value="ECO:0000315"/>
    <property type="project" value="UniProtKB"/>
</dbReference>
<dbReference type="GO" id="GO:0060291">
    <property type="term" value="P:long-term synaptic potentiation"/>
    <property type="evidence" value="ECO:0000315"/>
    <property type="project" value="UniProtKB"/>
</dbReference>
<dbReference type="GO" id="GO:0051260">
    <property type="term" value="P:protein homooligomerization"/>
    <property type="evidence" value="ECO:0000250"/>
    <property type="project" value="UniProtKB"/>
</dbReference>
<dbReference type="CDD" id="cd00071">
    <property type="entry name" value="GMPK"/>
    <property type="match status" value="1"/>
</dbReference>
<dbReference type="CDD" id="cd10832">
    <property type="entry name" value="PDZ_MPP6-MPP2-like"/>
    <property type="match status" value="1"/>
</dbReference>
<dbReference type="CDD" id="cd12037">
    <property type="entry name" value="SH3_MPP2"/>
    <property type="match status" value="1"/>
</dbReference>
<dbReference type="FunFam" id="3.30.63.10:FF:000002">
    <property type="entry name" value="Guanylate kinase 1"/>
    <property type="match status" value="1"/>
</dbReference>
<dbReference type="FunFam" id="2.30.30.40:FF:000069">
    <property type="entry name" value="MAGUK p55 subfamily member 6"/>
    <property type="match status" value="1"/>
</dbReference>
<dbReference type="FunFam" id="2.30.42.10:FF:000047">
    <property type="entry name" value="MAGUK p55 subfamily member 6"/>
    <property type="match status" value="1"/>
</dbReference>
<dbReference type="FunFam" id="3.40.50.300:FF:000146">
    <property type="entry name" value="MAGUK p55 subfamily member 6 isoform X1"/>
    <property type="match status" value="1"/>
</dbReference>
<dbReference type="Gene3D" id="2.30.42.10">
    <property type="match status" value="1"/>
</dbReference>
<dbReference type="Gene3D" id="1.10.287.650">
    <property type="entry name" value="L27 domain"/>
    <property type="match status" value="1"/>
</dbReference>
<dbReference type="Gene3D" id="3.40.50.300">
    <property type="entry name" value="P-loop containing nucleotide triphosphate hydrolases"/>
    <property type="match status" value="1"/>
</dbReference>
<dbReference type="Gene3D" id="2.30.30.40">
    <property type="entry name" value="SH3 Domains"/>
    <property type="match status" value="1"/>
</dbReference>
<dbReference type="InterPro" id="IPR008145">
    <property type="entry name" value="GK/Ca_channel_bsu"/>
</dbReference>
<dbReference type="InterPro" id="IPR008144">
    <property type="entry name" value="Guanylate_kin-like_dom"/>
</dbReference>
<dbReference type="InterPro" id="IPR020590">
    <property type="entry name" value="Guanylate_kinase_CS"/>
</dbReference>
<dbReference type="InterPro" id="IPR014775">
    <property type="entry name" value="L27_C"/>
</dbReference>
<dbReference type="InterPro" id="IPR004172">
    <property type="entry name" value="L27_dom"/>
</dbReference>
<dbReference type="InterPro" id="IPR036892">
    <property type="entry name" value="L27_dom_sf"/>
</dbReference>
<dbReference type="InterPro" id="IPR050716">
    <property type="entry name" value="MAGUK"/>
</dbReference>
<dbReference type="InterPro" id="IPR035602">
    <property type="entry name" value="MPP2_SH3"/>
</dbReference>
<dbReference type="InterPro" id="IPR027417">
    <property type="entry name" value="P-loop_NTPase"/>
</dbReference>
<dbReference type="InterPro" id="IPR001478">
    <property type="entry name" value="PDZ"/>
</dbReference>
<dbReference type="InterPro" id="IPR036034">
    <property type="entry name" value="PDZ_sf"/>
</dbReference>
<dbReference type="InterPro" id="IPR036028">
    <property type="entry name" value="SH3-like_dom_sf"/>
</dbReference>
<dbReference type="InterPro" id="IPR001452">
    <property type="entry name" value="SH3_domain"/>
</dbReference>
<dbReference type="PANTHER" id="PTHR23122">
    <property type="entry name" value="MEMBRANE-ASSOCIATED GUANYLATE KINASE MAGUK"/>
    <property type="match status" value="1"/>
</dbReference>
<dbReference type="Pfam" id="PF00625">
    <property type="entry name" value="Guanylate_kin"/>
    <property type="match status" value="1"/>
</dbReference>
<dbReference type="Pfam" id="PF02828">
    <property type="entry name" value="L27"/>
    <property type="match status" value="2"/>
</dbReference>
<dbReference type="Pfam" id="PF00595">
    <property type="entry name" value="PDZ"/>
    <property type="match status" value="1"/>
</dbReference>
<dbReference type="Pfam" id="PF07653">
    <property type="entry name" value="SH3_2"/>
    <property type="match status" value="1"/>
</dbReference>
<dbReference type="SMART" id="SM00072">
    <property type="entry name" value="GuKc"/>
    <property type="match status" value="1"/>
</dbReference>
<dbReference type="SMART" id="SM00569">
    <property type="entry name" value="L27"/>
    <property type="match status" value="2"/>
</dbReference>
<dbReference type="SMART" id="SM00228">
    <property type="entry name" value="PDZ"/>
    <property type="match status" value="1"/>
</dbReference>
<dbReference type="SMART" id="SM00326">
    <property type="entry name" value="SH3"/>
    <property type="match status" value="1"/>
</dbReference>
<dbReference type="SUPFAM" id="SSF101288">
    <property type="entry name" value="L27 domain"/>
    <property type="match status" value="1"/>
</dbReference>
<dbReference type="SUPFAM" id="SSF52540">
    <property type="entry name" value="P-loop containing nucleoside triphosphate hydrolases"/>
    <property type="match status" value="1"/>
</dbReference>
<dbReference type="SUPFAM" id="SSF50156">
    <property type="entry name" value="PDZ domain-like"/>
    <property type="match status" value="1"/>
</dbReference>
<dbReference type="SUPFAM" id="SSF50044">
    <property type="entry name" value="SH3-domain"/>
    <property type="match status" value="1"/>
</dbReference>
<dbReference type="PROSITE" id="PS00856">
    <property type="entry name" value="GUANYLATE_KINASE_1"/>
    <property type="match status" value="1"/>
</dbReference>
<dbReference type="PROSITE" id="PS50052">
    <property type="entry name" value="GUANYLATE_KINASE_2"/>
    <property type="match status" value="1"/>
</dbReference>
<dbReference type="PROSITE" id="PS51022">
    <property type="entry name" value="L27"/>
    <property type="match status" value="2"/>
</dbReference>
<dbReference type="PROSITE" id="PS50106">
    <property type="entry name" value="PDZ"/>
    <property type="match status" value="1"/>
</dbReference>
<dbReference type="PROSITE" id="PS50002">
    <property type="entry name" value="SH3"/>
    <property type="match status" value="1"/>
</dbReference>